<feature type="chain" id="PRO_1000147375" description="Nucleotide-binding protein CTN_0898">
    <location>
        <begin position="1"/>
        <end position="281"/>
    </location>
</feature>
<feature type="binding site" evidence="1">
    <location>
        <begin position="9"/>
        <end position="16"/>
    </location>
    <ligand>
        <name>ATP</name>
        <dbReference type="ChEBI" id="CHEBI:30616"/>
    </ligand>
</feature>
<feature type="binding site" evidence="1">
    <location>
        <begin position="58"/>
        <end position="61"/>
    </location>
    <ligand>
        <name>GTP</name>
        <dbReference type="ChEBI" id="CHEBI:37565"/>
    </ligand>
</feature>
<protein>
    <recommendedName>
        <fullName evidence="1">Nucleotide-binding protein CTN_0898</fullName>
    </recommendedName>
</protein>
<proteinExistence type="inferred from homology"/>
<comment type="function">
    <text evidence="1">Displays ATPase and GTPase activities.</text>
</comment>
<comment type="similarity">
    <text evidence="1">Belongs to the RapZ-like family.</text>
</comment>
<organism>
    <name type="scientific">Thermotoga neapolitana (strain ATCC 49049 / DSM 4359 / NBRC 107923 / NS-E)</name>
    <dbReference type="NCBI Taxonomy" id="309803"/>
    <lineage>
        <taxon>Bacteria</taxon>
        <taxon>Thermotogati</taxon>
        <taxon>Thermotogota</taxon>
        <taxon>Thermotogae</taxon>
        <taxon>Thermotogales</taxon>
        <taxon>Thermotogaceae</taxon>
        <taxon>Thermotoga</taxon>
    </lineage>
</organism>
<keyword id="KW-0067">ATP-binding</keyword>
<keyword id="KW-0342">GTP-binding</keyword>
<keyword id="KW-0547">Nucleotide-binding</keyword>
<gene>
    <name type="ordered locus">CTN_0898</name>
</gene>
<name>Y898_THENN</name>
<evidence type="ECO:0000255" key="1">
    <source>
        <dbReference type="HAMAP-Rule" id="MF_00636"/>
    </source>
</evidence>
<sequence>MKRVVVVTGLSGAGKTTAMGFLEDLGYFCVDNVPGSILEELLKLFMSSDLEKMAIAVDVRSEHFSDPVEAIEKIKKKTNALIVFLEASKEELLRRYALTRRRHPLQRNDVGLEEAIEKERQILLPIKEMADFVIDTTKMTSHQLREILGQSLMNQSGGISVRILSFGFKHGIPMDADFIFDARFLPNPHYVPELSHKTGLDREVEEYFKKYSLVDEFVYKIFEVVNVAVKEYQRSGRRIVTVGIGCTGGRHRSVYIAHKIAEMLKKEGFSVVEKHRDLEKV</sequence>
<dbReference type="EMBL" id="CP000916">
    <property type="protein sequence ID" value="ACM23074.1"/>
    <property type="molecule type" value="Genomic_DNA"/>
</dbReference>
<dbReference type="RefSeq" id="WP_015919391.1">
    <property type="nucleotide sequence ID" value="NC_011978.1"/>
</dbReference>
<dbReference type="SMR" id="B9K7Z1"/>
<dbReference type="STRING" id="309803.CTN_0898"/>
<dbReference type="KEGG" id="tna:CTN_0898"/>
<dbReference type="eggNOG" id="COG1660">
    <property type="taxonomic scope" value="Bacteria"/>
</dbReference>
<dbReference type="HOGENOM" id="CLU_059558_1_1_0"/>
<dbReference type="Proteomes" id="UP000000445">
    <property type="component" value="Chromosome"/>
</dbReference>
<dbReference type="GO" id="GO:0005524">
    <property type="term" value="F:ATP binding"/>
    <property type="evidence" value="ECO:0007669"/>
    <property type="project" value="UniProtKB-UniRule"/>
</dbReference>
<dbReference type="GO" id="GO:0005525">
    <property type="term" value="F:GTP binding"/>
    <property type="evidence" value="ECO:0007669"/>
    <property type="project" value="UniProtKB-UniRule"/>
</dbReference>
<dbReference type="Gene3D" id="3.40.50.300">
    <property type="entry name" value="P-loop containing nucleotide triphosphate hydrolases"/>
    <property type="match status" value="1"/>
</dbReference>
<dbReference type="HAMAP" id="MF_00636">
    <property type="entry name" value="RapZ_like"/>
    <property type="match status" value="1"/>
</dbReference>
<dbReference type="InterPro" id="IPR027417">
    <property type="entry name" value="P-loop_NTPase"/>
</dbReference>
<dbReference type="InterPro" id="IPR005337">
    <property type="entry name" value="RapZ-like"/>
</dbReference>
<dbReference type="InterPro" id="IPR053930">
    <property type="entry name" value="RapZ-like_N"/>
</dbReference>
<dbReference type="InterPro" id="IPR053931">
    <property type="entry name" value="RapZ_C"/>
</dbReference>
<dbReference type="NCBIfam" id="NF003828">
    <property type="entry name" value="PRK05416.1"/>
    <property type="match status" value="1"/>
</dbReference>
<dbReference type="PANTHER" id="PTHR30448">
    <property type="entry name" value="RNASE ADAPTER PROTEIN RAPZ"/>
    <property type="match status" value="1"/>
</dbReference>
<dbReference type="PANTHER" id="PTHR30448:SF0">
    <property type="entry name" value="RNASE ADAPTER PROTEIN RAPZ"/>
    <property type="match status" value="1"/>
</dbReference>
<dbReference type="Pfam" id="PF22740">
    <property type="entry name" value="PapZ_C"/>
    <property type="match status" value="1"/>
</dbReference>
<dbReference type="Pfam" id="PF03668">
    <property type="entry name" value="RapZ-like_N"/>
    <property type="match status" value="1"/>
</dbReference>
<dbReference type="PIRSF" id="PIRSF005052">
    <property type="entry name" value="P-loopkin"/>
    <property type="match status" value="1"/>
</dbReference>
<dbReference type="SUPFAM" id="SSF52540">
    <property type="entry name" value="P-loop containing nucleoside triphosphate hydrolases"/>
    <property type="match status" value="1"/>
</dbReference>
<reference key="1">
    <citation type="submission" date="2007-11" db="EMBL/GenBank/DDBJ databases">
        <title>The genome sequence of the hyperthermophilic bacterium Thermotoga neapolitana.</title>
        <authorList>
            <person name="Lim S.K."/>
            <person name="Kim J.S."/>
            <person name="Cha S.H."/>
            <person name="Park B.C."/>
            <person name="Lee D.S."/>
            <person name="Tae H.S."/>
            <person name="Kim S.-J."/>
            <person name="Kim J.J."/>
            <person name="Park K.J."/>
            <person name="Lee S.Y."/>
        </authorList>
    </citation>
    <scope>NUCLEOTIDE SEQUENCE [LARGE SCALE GENOMIC DNA]</scope>
    <source>
        <strain>ATCC 49049 / DSM 4359 / NBRC 107923 / NS-E</strain>
    </source>
</reference>
<accession>B9K7Z1</accession>